<evidence type="ECO:0000250" key="1"/>
<evidence type="ECO:0000255" key="2"/>
<evidence type="ECO:0000255" key="3">
    <source>
        <dbReference type="PROSITE-ProRule" id="PRU00145"/>
    </source>
</evidence>
<evidence type="ECO:0000255" key="4">
    <source>
        <dbReference type="PROSITE-ProRule" id="PRU00288"/>
    </source>
</evidence>
<evidence type="ECO:0000256" key="5">
    <source>
        <dbReference type="SAM" id="MobiDB-lite"/>
    </source>
</evidence>
<dbReference type="EMBL" id="BC085250">
    <property type="protein sequence ID" value="AAH85250.1"/>
    <property type="molecule type" value="mRNA"/>
</dbReference>
<dbReference type="CCDS" id="CCDS18802.1"/>
<dbReference type="RefSeq" id="NP_001008233.1">
    <property type="nucleotide sequence ID" value="NM_001008232.2"/>
</dbReference>
<dbReference type="SMR" id="Q5U464"/>
<dbReference type="FunCoup" id="Q5U464">
    <property type="interactions" value="354"/>
</dbReference>
<dbReference type="STRING" id="10090.ENSMUSP00000041899"/>
<dbReference type="iPTMnet" id="Q5U464"/>
<dbReference type="PhosphoSitePlus" id="Q5U464"/>
<dbReference type="jPOST" id="Q5U464"/>
<dbReference type="PaxDb" id="10090-ENSMUSP00000041899"/>
<dbReference type="ProteomicsDB" id="277244"/>
<dbReference type="Pumba" id="Q5U464"/>
<dbReference type="Antibodypedia" id="30164">
    <property type="antibodies" value="158 antibodies from 24 providers"/>
</dbReference>
<dbReference type="DNASU" id="230837"/>
<dbReference type="Ensembl" id="ENSMUST00000047526.8">
    <property type="protein sequence ID" value="ENSMUSP00000041899.8"/>
    <property type="gene ID" value="ENSMUSG00000036995.8"/>
</dbReference>
<dbReference type="GeneID" id="230837"/>
<dbReference type="KEGG" id="mmu:230837"/>
<dbReference type="UCSC" id="uc008vhu.2">
    <property type="organism name" value="mouse"/>
</dbReference>
<dbReference type="AGR" id="MGI:2684986"/>
<dbReference type="CTD" id="55616"/>
<dbReference type="MGI" id="MGI:2684986">
    <property type="gene designation" value="Asap3"/>
</dbReference>
<dbReference type="VEuPathDB" id="HostDB:ENSMUSG00000036995"/>
<dbReference type="eggNOG" id="KOG0521">
    <property type="taxonomic scope" value="Eukaryota"/>
</dbReference>
<dbReference type="GeneTree" id="ENSGT00940000161085"/>
<dbReference type="HOGENOM" id="CLU_006942_1_0_1"/>
<dbReference type="InParanoid" id="Q5U464"/>
<dbReference type="OMA" id="IMEAQLP"/>
<dbReference type="OrthoDB" id="435430at2759"/>
<dbReference type="PhylomeDB" id="Q5U464"/>
<dbReference type="TreeFam" id="TF325156"/>
<dbReference type="BioGRID-ORCS" id="230837">
    <property type="hits" value="1 hit in 77 CRISPR screens"/>
</dbReference>
<dbReference type="ChiTaRS" id="Asap3">
    <property type="organism name" value="mouse"/>
</dbReference>
<dbReference type="PRO" id="PR:Q5U464"/>
<dbReference type="Proteomes" id="UP000000589">
    <property type="component" value="Chromosome 4"/>
</dbReference>
<dbReference type="RNAct" id="Q5U464">
    <property type="molecule type" value="protein"/>
</dbReference>
<dbReference type="Bgee" id="ENSMUSG00000036995">
    <property type="expression patterns" value="Expressed in ectoplacental cone and 84 other cell types or tissues"/>
</dbReference>
<dbReference type="GO" id="GO:0005829">
    <property type="term" value="C:cytosol"/>
    <property type="evidence" value="ECO:0007669"/>
    <property type="project" value="Ensembl"/>
</dbReference>
<dbReference type="GO" id="GO:0005925">
    <property type="term" value="C:focal adhesion"/>
    <property type="evidence" value="ECO:0000250"/>
    <property type="project" value="UniProtKB"/>
</dbReference>
<dbReference type="GO" id="GO:0005654">
    <property type="term" value="C:nucleoplasm"/>
    <property type="evidence" value="ECO:0007669"/>
    <property type="project" value="Ensembl"/>
</dbReference>
<dbReference type="GO" id="GO:0001726">
    <property type="term" value="C:ruffle"/>
    <property type="evidence" value="ECO:0000250"/>
    <property type="project" value="UniProtKB"/>
</dbReference>
<dbReference type="GO" id="GO:0005096">
    <property type="term" value="F:GTPase activator activity"/>
    <property type="evidence" value="ECO:0000250"/>
    <property type="project" value="UniProtKB"/>
</dbReference>
<dbReference type="GO" id="GO:0008270">
    <property type="term" value="F:zinc ion binding"/>
    <property type="evidence" value="ECO:0007669"/>
    <property type="project" value="UniProtKB-KW"/>
</dbReference>
<dbReference type="GO" id="GO:0016477">
    <property type="term" value="P:cell migration"/>
    <property type="evidence" value="ECO:0000250"/>
    <property type="project" value="UniProtKB"/>
</dbReference>
<dbReference type="GO" id="GO:0043547">
    <property type="term" value="P:positive regulation of GTPase activity"/>
    <property type="evidence" value="ECO:0000250"/>
    <property type="project" value="UniProtKB"/>
</dbReference>
<dbReference type="GO" id="GO:0051492">
    <property type="term" value="P:regulation of stress fiber assembly"/>
    <property type="evidence" value="ECO:0000250"/>
    <property type="project" value="UniProtKB"/>
</dbReference>
<dbReference type="CDD" id="cd17900">
    <property type="entry name" value="ArfGap_ASAP3"/>
    <property type="match status" value="1"/>
</dbReference>
<dbReference type="CDD" id="cd07640">
    <property type="entry name" value="BAR_ASAP3"/>
    <property type="match status" value="1"/>
</dbReference>
<dbReference type="CDD" id="cd13251">
    <property type="entry name" value="PH_ASAP"/>
    <property type="match status" value="1"/>
</dbReference>
<dbReference type="FunFam" id="1.10.220.150:FF:000002">
    <property type="entry name" value="arf-GAP with SH3 domain, ANK repeat and PH domain-containing protein 1"/>
    <property type="match status" value="1"/>
</dbReference>
<dbReference type="FunFam" id="1.25.40.20:FF:000006">
    <property type="entry name" value="Arf-GAP with SH3 domain, ANK repeat and PH domain-containing protein 2"/>
    <property type="match status" value="1"/>
</dbReference>
<dbReference type="FunFam" id="2.30.29.30:FF:000012">
    <property type="entry name" value="Arf-GAP with SH3 domain, ANK repeat and PH domain-containing protein 2"/>
    <property type="match status" value="1"/>
</dbReference>
<dbReference type="FunFam" id="1.20.1270.60:FF:000036">
    <property type="entry name" value="Arf-GAP with SH3 domain, ANK repeat and PH domain-containing protein 3"/>
    <property type="match status" value="1"/>
</dbReference>
<dbReference type="FunFam" id="1.25.40.950:FF:000002">
    <property type="entry name" value="Arf-GAP with SH3 domain, ANK repeat and PH domain-containing protein 3"/>
    <property type="match status" value="1"/>
</dbReference>
<dbReference type="Gene3D" id="1.25.40.950">
    <property type="match status" value="1"/>
</dbReference>
<dbReference type="Gene3D" id="1.25.40.20">
    <property type="entry name" value="Ankyrin repeat-containing domain"/>
    <property type="match status" value="1"/>
</dbReference>
<dbReference type="Gene3D" id="1.10.220.150">
    <property type="entry name" value="Arf GTPase activating protein"/>
    <property type="match status" value="1"/>
</dbReference>
<dbReference type="Gene3D" id="1.20.1270.60">
    <property type="entry name" value="Arfaptin homology (AH) domain/BAR domain"/>
    <property type="match status" value="1"/>
</dbReference>
<dbReference type="Gene3D" id="2.30.29.30">
    <property type="entry name" value="Pleckstrin-homology domain (PH domain)/Phosphotyrosine-binding domain (PTB)"/>
    <property type="match status" value="1"/>
</dbReference>
<dbReference type="InterPro" id="IPR027267">
    <property type="entry name" value="AH/BAR_dom_sf"/>
</dbReference>
<dbReference type="InterPro" id="IPR002110">
    <property type="entry name" value="Ankyrin_rpt"/>
</dbReference>
<dbReference type="InterPro" id="IPR036770">
    <property type="entry name" value="Ankyrin_rpt-contain_sf"/>
</dbReference>
<dbReference type="InterPro" id="IPR037278">
    <property type="entry name" value="ARFGAP/RecO"/>
</dbReference>
<dbReference type="InterPro" id="IPR001164">
    <property type="entry name" value="ArfGAP_dom"/>
</dbReference>
<dbReference type="InterPro" id="IPR038508">
    <property type="entry name" value="ArfGAP_dom_sf"/>
</dbReference>
<dbReference type="InterPro" id="IPR043593">
    <property type="entry name" value="ASAP"/>
</dbReference>
<dbReference type="InterPro" id="IPR047006">
    <property type="entry name" value="ASAP3_ArfGap"/>
</dbReference>
<dbReference type="InterPro" id="IPR028775">
    <property type="entry name" value="BAR_ASAP3"/>
</dbReference>
<dbReference type="InterPro" id="IPR004148">
    <property type="entry name" value="BAR_dom"/>
</dbReference>
<dbReference type="InterPro" id="IPR011993">
    <property type="entry name" value="PH-like_dom_sf"/>
</dbReference>
<dbReference type="InterPro" id="IPR037844">
    <property type="entry name" value="PH_ASAP"/>
</dbReference>
<dbReference type="InterPro" id="IPR001849">
    <property type="entry name" value="PH_domain"/>
</dbReference>
<dbReference type="PANTHER" id="PTHR45854:SF1">
    <property type="entry name" value="ARF-GAP WITH SH3 DOMAIN, ANK REPEAT AND PH DOMAIN-CONTAINING PROTEIN 3"/>
    <property type="match status" value="1"/>
</dbReference>
<dbReference type="PANTHER" id="PTHR45854">
    <property type="entry name" value="ASAP FAMILY MEMBER"/>
    <property type="match status" value="1"/>
</dbReference>
<dbReference type="Pfam" id="PF12796">
    <property type="entry name" value="Ank_2"/>
    <property type="match status" value="1"/>
</dbReference>
<dbReference type="Pfam" id="PF01412">
    <property type="entry name" value="ArfGap"/>
    <property type="match status" value="1"/>
</dbReference>
<dbReference type="Pfam" id="PF16746">
    <property type="entry name" value="BAR_3"/>
    <property type="match status" value="1"/>
</dbReference>
<dbReference type="Pfam" id="PF00169">
    <property type="entry name" value="PH"/>
    <property type="match status" value="1"/>
</dbReference>
<dbReference type="PRINTS" id="PR00405">
    <property type="entry name" value="REVINTRACTNG"/>
</dbReference>
<dbReference type="SMART" id="SM00248">
    <property type="entry name" value="ANK"/>
    <property type="match status" value="2"/>
</dbReference>
<dbReference type="SMART" id="SM00105">
    <property type="entry name" value="ArfGap"/>
    <property type="match status" value="1"/>
</dbReference>
<dbReference type="SMART" id="SM00233">
    <property type="entry name" value="PH"/>
    <property type="match status" value="1"/>
</dbReference>
<dbReference type="SUPFAM" id="SSF48403">
    <property type="entry name" value="Ankyrin repeat"/>
    <property type="match status" value="1"/>
</dbReference>
<dbReference type="SUPFAM" id="SSF57863">
    <property type="entry name" value="ArfGap/RecO-like zinc finger"/>
    <property type="match status" value="1"/>
</dbReference>
<dbReference type="SUPFAM" id="SSF103657">
    <property type="entry name" value="BAR/IMD domain-like"/>
    <property type="match status" value="1"/>
</dbReference>
<dbReference type="SUPFAM" id="SSF50729">
    <property type="entry name" value="PH domain-like"/>
    <property type="match status" value="1"/>
</dbReference>
<dbReference type="PROSITE" id="PS50297">
    <property type="entry name" value="ANK_REP_REGION"/>
    <property type="match status" value="1"/>
</dbReference>
<dbReference type="PROSITE" id="PS50088">
    <property type="entry name" value="ANK_REPEAT"/>
    <property type="match status" value="2"/>
</dbReference>
<dbReference type="PROSITE" id="PS50115">
    <property type="entry name" value="ARFGAP"/>
    <property type="match status" value="1"/>
</dbReference>
<dbReference type="PROSITE" id="PS50003">
    <property type="entry name" value="PH_DOMAIN"/>
    <property type="match status" value="1"/>
</dbReference>
<accession>Q5U464</accession>
<name>ASAP3_MOUSE</name>
<proteinExistence type="evidence at transcript level"/>
<feature type="chain" id="PRO_0000232888" description="Arf-GAP with SH3 domain, ANK repeat and PH domain-containing protein 3">
    <location>
        <begin position="1"/>
        <end position="904"/>
    </location>
</feature>
<feature type="domain" description="PH" evidence="3">
    <location>
        <begin position="302"/>
        <end position="394"/>
    </location>
</feature>
<feature type="domain" description="Arf-GAP" evidence="4">
    <location>
        <begin position="425"/>
        <end position="550"/>
    </location>
</feature>
<feature type="repeat" description="ANK 1">
    <location>
        <begin position="584"/>
        <end position="616"/>
    </location>
</feature>
<feature type="repeat" description="ANK 2">
    <location>
        <begin position="620"/>
        <end position="649"/>
    </location>
</feature>
<feature type="zinc finger region" description="C4-type" evidence="4">
    <location>
        <begin position="440"/>
        <end position="463"/>
    </location>
</feature>
<feature type="region of interest" description="Disordered" evidence="5">
    <location>
        <begin position="275"/>
        <end position="297"/>
    </location>
</feature>
<feature type="region of interest" description="Disordered" evidence="5">
    <location>
        <begin position="697"/>
        <end position="716"/>
    </location>
</feature>
<feature type="region of interest" description="Disordered" evidence="5">
    <location>
        <begin position="735"/>
        <end position="877"/>
    </location>
</feature>
<feature type="coiled-coil region" evidence="2">
    <location>
        <begin position="142"/>
        <end position="169"/>
    </location>
</feature>
<feature type="coiled-coil region" evidence="2">
    <location>
        <begin position="249"/>
        <end position="273"/>
    </location>
</feature>
<feature type="compositionally biased region" description="Polar residues" evidence="5">
    <location>
        <begin position="735"/>
        <end position="750"/>
    </location>
</feature>
<feature type="compositionally biased region" description="Low complexity" evidence="5">
    <location>
        <begin position="794"/>
        <end position="806"/>
    </location>
</feature>
<protein>
    <recommendedName>
        <fullName>Arf-GAP with SH3 domain, ANK repeat and PH domain-containing protein 3</fullName>
    </recommendedName>
    <alternativeName>
        <fullName>Development and differentiation-enhancing factor-like 1</fullName>
    </alternativeName>
</protein>
<comment type="function">
    <text evidence="1">Promotes cell proliferation.</text>
</comment>
<comment type="subcellular location">
    <subcellularLocation>
        <location evidence="1">Cytoplasm</location>
    </subcellularLocation>
</comment>
<reference key="1">
    <citation type="journal article" date="2004" name="Genome Res.">
        <title>The status, quality, and expansion of the NIH full-length cDNA project: the Mammalian Gene Collection (MGC).</title>
        <authorList>
            <consortium name="The MGC Project Team"/>
        </authorList>
    </citation>
    <scope>NUCLEOTIDE SEQUENCE [LARGE SCALE MRNA]</scope>
    <source>
        <strain>C57BL/6J</strain>
        <tissue>Embryonic germ cell</tissue>
    </source>
</reference>
<keyword id="KW-0040">ANK repeat</keyword>
<keyword id="KW-0175">Coiled coil</keyword>
<keyword id="KW-0963">Cytoplasm</keyword>
<keyword id="KW-0479">Metal-binding</keyword>
<keyword id="KW-1185">Reference proteome</keyword>
<keyword id="KW-0677">Repeat</keyword>
<keyword id="KW-0862">Zinc</keyword>
<keyword id="KW-0863">Zinc-finger</keyword>
<organism>
    <name type="scientific">Mus musculus</name>
    <name type="common">Mouse</name>
    <dbReference type="NCBI Taxonomy" id="10090"/>
    <lineage>
        <taxon>Eukaryota</taxon>
        <taxon>Metazoa</taxon>
        <taxon>Chordata</taxon>
        <taxon>Craniata</taxon>
        <taxon>Vertebrata</taxon>
        <taxon>Euteleostomi</taxon>
        <taxon>Mammalia</taxon>
        <taxon>Eutheria</taxon>
        <taxon>Euarchontoglires</taxon>
        <taxon>Glires</taxon>
        <taxon>Rodentia</taxon>
        <taxon>Myomorpha</taxon>
        <taxon>Muroidea</taxon>
        <taxon>Muridae</taxon>
        <taxon>Murinae</taxon>
        <taxon>Mus</taxon>
        <taxon>Mus</taxon>
    </lineage>
</organism>
<sequence length="904" mass="99276">MPEQLSVAEFLAVTAEDLSSPAGAAAFAAKMPRCRGAALAREEALEGDQAILQRIKKAVRAIHSSGLGHVETEEHYREAVEALGNSHLSQNSHELSTGFLNLAVFTREVAALFKNLVQNLNNIVSFPLDSLMKGHLRDGRHDSKKHLEKAWKDYESKVAKLEKERDRARFPGGSHGVMSQDTQRERRVFQLHMCEYLVKAGESQVKQGPDFLQSLIKFFHAQHNFFQDGWKAAQSLSPFIDKLAASVHGLRQAQEEELHKLTQLRDSLRGMLHLESREDHPNRKNSGGGYSIHQHQGNKQFGTEKVGFLYKKSDGIRRVWQKRKCGVKYGCLTISHSMINRPPVKLPLLTCQVRPNPEEKRCFDLVTHNRTYHFHAEDEQECEAWVSVLQNSKDEALSNAFHGEPSGGQWSWGTRLDTEPHDLTNMLVAEVKSRPGNDRCCDCGAADPTWLSTNLGVLTCIQCSGVHRELGVRFSRIQSLTLDLLGPSELLLALNIGNSHFNEVMEAHLPSHGSPKPSAESDMSSRRNYIVAKYVEHKFARHSTPDPQKLRTAICSRDLLSVLEAFANGQDFGQLLPGPDGQAPGELALHLAIRVASHASLPIVDFLIQNGGHLDAKAADGNTALHCAALHGQLDCLKLLLRGRAPVGAVNDAGETALDIARNRQHKECEELLEQAQAGTLAFPLHMDYHWGHSMEHGFDSEEEEEEEKHCPSKPPAQACWGSVRLDISNKTYETVATPGPATTQSQSEDSPPPLPIKNSSRTIVLGRAGHCSGDRSDLPSLRSESPEALENRSSPASSSSSLTSSVEPGGLSQAPSSPEEGLQESASISRPGLASGTTSAEVYLPVKFSSESTRSYRRGGRSLEDSPSARQPLCSRRHIPVGLVEGDGSKIGVLPDSLQLLHD</sequence>
<gene>
    <name type="primary">Asap3</name>
    <name type="synonym">Ddefl1</name>
</gene>